<sequence length="89" mass="10511">MAKKSKIAKEQKRQELVNKYYELRKELKAKGDYEALRKLPRDSSPTRLTRRCKVTGRPRGVLRKFEMSRIAFREHAHKGQIPGVKKSSW</sequence>
<organism>
    <name type="scientific">Staphylococcus epidermidis (strain ATCC 35984 / DSM 28319 / BCRC 17069 / CCUG 31568 / BM 3577 / RP62A)</name>
    <dbReference type="NCBI Taxonomy" id="176279"/>
    <lineage>
        <taxon>Bacteria</taxon>
        <taxon>Bacillati</taxon>
        <taxon>Bacillota</taxon>
        <taxon>Bacilli</taxon>
        <taxon>Bacillales</taxon>
        <taxon>Staphylococcaceae</taxon>
        <taxon>Staphylococcus</taxon>
    </lineage>
</organism>
<comment type="function">
    <text evidence="1">Binds 16S rRNA, required for the assembly of 30S particles and may also be responsible for determining the conformation of the 16S rRNA at the A site.</text>
</comment>
<comment type="subunit">
    <text evidence="1">Part of the 30S ribosomal subunit. Contacts proteins S3 and S10.</text>
</comment>
<comment type="similarity">
    <text evidence="1">Belongs to the universal ribosomal protein uS14 family.</text>
</comment>
<keyword id="KW-1185">Reference proteome</keyword>
<keyword id="KW-0687">Ribonucleoprotein</keyword>
<keyword id="KW-0689">Ribosomal protein</keyword>
<keyword id="KW-0694">RNA-binding</keyword>
<keyword id="KW-0699">rRNA-binding</keyword>
<protein>
    <recommendedName>
        <fullName evidence="1">Small ribosomal subunit protein uS14A</fullName>
    </recommendedName>
    <alternativeName>
        <fullName evidence="2">30S ribosomal protein S14</fullName>
    </alternativeName>
</protein>
<accession>Q5HPK6</accession>
<name>RS14_STAEQ</name>
<dbReference type="EMBL" id="CP000029">
    <property type="protein sequence ID" value="AAW54272.1"/>
    <property type="molecule type" value="Genomic_DNA"/>
</dbReference>
<dbReference type="RefSeq" id="WP_001831302.1">
    <property type="nucleotide sequence ID" value="NC_002976.3"/>
</dbReference>
<dbReference type="SMR" id="Q5HPK6"/>
<dbReference type="STRING" id="176279.SERP0905"/>
<dbReference type="GeneID" id="50018854"/>
<dbReference type="KEGG" id="ser:SERP0905"/>
<dbReference type="eggNOG" id="COG0199">
    <property type="taxonomic scope" value="Bacteria"/>
</dbReference>
<dbReference type="HOGENOM" id="CLU_139869_0_0_9"/>
<dbReference type="Proteomes" id="UP000000531">
    <property type="component" value="Chromosome"/>
</dbReference>
<dbReference type="GO" id="GO:0005737">
    <property type="term" value="C:cytoplasm"/>
    <property type="evidence" value="ECO:0007669"/>
    <property type="project" value="UniProtKB-ARBA"/>
</dbReference>
<dbReference type="GO" id="GO:0015935">
    <property type="term" value="C:small ribosomal subunit"/>
    <property type="evidence" value="ECO:0007669"/>
    <property type="project" value="TreeGrafter"/>
</dbReference>
<dbReference type="GO" id="GO:0019843">
    <property type="term" value="F:rRNA binding"/>
    <property type="evidence" value="ECO:0007669"/>
    <property type="project" value="UniProtKB-UniRule"/>
</dbReference>
<dbReference type="GO" id="GO:0003735">
    <property type="term" value="F:structural constituent of ribosome"/>
    <property type="evidence" value="ECO:0007669"/>
    <property type="project" value="InterPro"/>
</dbReference>
<dbReference type="GO" id="GO:0006412">
    <property type="term" value="P:translation"/>
    <property type="evidence" value="ECO:0007669"/>
    <property type="project" value="UniProtKB-UniRule"/>
</dbReference>
<dbReference type="FunFam" id="4.10.830.10:FF:000003">
    <property type="entry name" value="30S ribosomal protein S14"/>
    <property type="match status" value="1"/>
</dbReference>
<dbReference type="Gene3D" id="4.10.830.10">
    <property type="entry name" value="30s Ribosomal Protein S14, Chain N"/>
    <property type="match status" value="1"/>
</dbReference>
<dbReference type="HAMAP" id="MF_00537">
    <property type="entry name" value="Ribosomal_uS14_1"/>
    <property type="match status" value="1"/>
</dbReference>
<dbReference type="InterPro" id="IPR001209">
    <property type="entry name" value="Ribosomal_uS14"/>
</dbReference>
<dbReference type="InterPro" id="IPR023036">
    <property type="entry name" value="Ribosomal_uS14_bac/plastid"/>
</dbReference>
<dbReference type="InterPro" id="IPR018271">
    <property type="entry name" value="Ribosomal_uS14_CS"/>
</dbReference>
<dbReference type="InterPro" id="IPR043140">
    <property type="entry name" value="Ribosomal_uS14_sf"/>
</dbReference>
<dbReference type="NCBIfam" id="NF006477">
    <property type="entry name" value="PRK08881.1"/>
    <property type="match status" value="1"/>
</dbReference>
<dbReference type="PANTHER" id="PTHR19836">
    <property type="entry name" value="30S RIBOSOMAL PROTEIN S14"/>
    <property type="match status" value="1"/>
</dbReference>
<dbReference type="PANTHER" id="PTHR19836:SF19">
    <property type="entry name" value="SMALL RIBOSOMAL SUBUNIT PROTEIN US14M"/>
    <property type="match status" value="1"/>
</dbReference>
<dbReference type="Pfam" id="PF00253">
    <property type="entry name" value="Ribosomal_S14"/>
    <property type="match status" value="1"/>
</dbReference>
<dbReference type="SUPFAM" id="SSF57716">
    <property type="entry name" value="Glucocorticoid receptor-like (DNA-binding domain)"/>
    <property type="match status" value="1"/>
</dbReference>
<dbReference type="PROSITE" id="PS00527">
    <property type="entry name" value="RIBOSOMAL_S14"/>
    <property type="match status" value="1"/>
</dbReference>
<reference key="1">
    <citation type="journal article" date="2005" name="J. Bacteriol.">
        <title>Insights on evolution of virulence and resistance from the complete genome analysis of an early methicillin-resistant Staphylococcus aureus strain and a biofilm-producing methicillin-resistant Staphylococcus epidermidis strain.</title>
        <authorList>
            <person name="Gill S.R."/>
            <person name="Fouts D.E."/>
            <person name="Archer G.L."/>
            <person name="Mongodin E.F."/>
            <person name="DeBoy R.T."/>
            <person name="Ravel J."/>
            <person name="Paulsen I.T."/>
            <person name="Kolonay J.F."/>
            <person name="Brinkac L.M."/>
            <person name="Beanan M.J."/>
            <person name="Dodson R.J."/>
            <person name="Daugherty S.C."/>
            <person name="Madupu R."/>
            <person name="Angiuoli S.V."/>
            <person name="Durkin A.S."/>
            <person name="Haft D.H."/>
            <person name="Vamathevan J.J."/>
            <person name="Khouri H."/>
            <person name="Utterback T.R."/>
            <person name="Lee C."/>
            <person name="Dimitrov G."/>
            <person name="Jiang L."/>
            <person name="Qin H."/>
            <person name="Weidman J."/>
            <person name="Tran K."/>
            <person name="Kang K.H."/>
            <person name="Hance I.R."/>
            <person name="Nelson K.E."/>
            <person name="Fraser C.M."/>
        </authorList>
    </citation>
    <scope>NUCLEOTIDE SEQUENCE [LARGE SCALE GENOMIC DNA]</scope>
    <source>
        <strain>ATCC 35984 / DSM 28319 / BCRC 17069 / CCUG 31568 / BM 3577 / RP62A</strain>
    </source>
</reference>
<gene>
    <name evidence="1" type="primary">rpsN</name>
    <name type="synonym">rpsN-1</name>
    <name type="synonym">rpsN2</name>
    <name type="ordered locus">SERP0905</name>
</gene>
<proteinExistence type="inferred from homology"/>
<evidence type="ECO:0000255" key="1">
    <source>
        <dbReference type="HAMAP-Rule" id="MF_00537"/>
    </source>
</evidence>
<evidence type="ECO:0000305" key="2"/>
<feature type="chain" id="PRO_0000269064" description="Small ribosomal subunit protein uS14A">
    <location>
        <begin position="1"/>
        <end position="89"/>
    </location>
</feature>